<proteinExistence type="inferred from homology"/>
<gene>
    <name type="primary">GRXC11</name>
    <name type="ordered locus">Os11g0656000</name>
    <name type="ordered locus">LOC_Os11g43530</name>
</gene>
<evidence type="ECO:0000250" key="1"/>
<evidence type="ECO:0000255" key="2">
    <source>
        <dbReference type="PROSITE-ProRule" id="PRU00686"/>
    </source>
</evidence>
<evidence type="ECO:0000305" key="3"/>
<name>GRC11_ORYSJ</name>
<comment type="function">
    <text evidence="1">Has a glutathione-disulfide oxidoreductase activity in the presence of NADPH and glutathione reductase. Reduces low molecular weight disulfides and proteins (By similarity).</text>
</comment>
<comment type="subcellular location">
    <subcellularLocation>
        <location evidence="1">Cytoplasm</location>
    </subcellularLocation>
    <subcellularLocation>
        <location evidence="1">Nucleus</location>
    </subcellularLocation>
</comment>
<comment type="similarity">
    <text evidence="3">Belongs to the glutaredoxin family. CC-type subfamily.</text>
</comment>
<keyword id="KW-0963">Cytoplasm</keyword>
<keyword id="KW-1015">Disulfide bond</keyword>
<keyword id="KW-0249">Electron transport</keyword>
<keyword id="KW-0539">Nucleus</keyword>
<keyword id="KW-0676">Redox-active center</keyword>
<keyword id="KW-1185">Reference proteome</keyword>
<keyword id="KW-0813">Transport</keyword>
<protein>
    <recommendedName>
        <fullName>Putative glutaredoxin-C11</fullName>
    </recommendedName>
</protein>
<feature type="chain" id="PRO_0000269672" description="Putative glutaredoxin-C11">
    <location>
        <begin position="1"/>
        <end position="109"/>
    </location>
</feature>
<feature type="domain" description="Glutaredoxin" evidence="2">
    <location>
        <begin position="2"/>
        <end position="108"/>
    </location>
</feature>
<feature type="short sequence motif" description="Responsive for interaction with TGA factors" evidence="1">
    <location>
        <begin position="106"/>
        <end position="109"/>
    </location>
</feature>
<feature type="disulfide bond" description="Redox-active" evidence="1">
    <location>
        <begin position="22"/>
        <end position="25"/>
    </location>
</feature>
<sequence length="109" mass="11329">MAEMVARLASERAVVVFTKSGCCMCTAVTTLLGELAVSAAVHELDRDPLGKEMEKELARRLYGSSGRGGPAVPAVFIGGSLVGGTSKVMAMHLKGELVPLLKSAGALWL</sequence>
<reference key="1">
    <citation type="journal article" date="2005" name="BMC Biol.">
        <title>The sequence of rice chromosomes 11 and 12, rich in disease resistance genes and recent gene duplications.</title>
        <authorList>
            <consortium name="The rice chromosomes 11 and 12 sequencing consortia"/>
        </authorList>
    </citation>
    <scope>NUCLEOTIDE SEQUENCE [LARGE SCALE GENOMIC DNA]</scope>
    <source>
        <strain>cv. Nipponbare</strain>
    </source>
</reference>
<reference key="2">
    <citation type="journal article" date="2005" name="Nature">
        <title>The map-based sequence of the rice genome.</title>
        <authorList>
            <consortium name="International rice genome sequencing project (IRGSP)"/>
        </authorList>
    </citation>
    <scope>NUCLEOTIDE SEQUENCE [LARGE SCALE GENOMIC DNA]</scope>
    <source>
        <strain>cv. Nipponbare</strain>
    </source>
</reference>
<reference key="3">
    <citation type="journal article" date="2008" name="Nucleic Acids Res.">
        <title>The rice annotation project database (RAP-DB): 2008 update.</title>
        <authorList>
            <consortium name="The rice annotation project (RAP)"/>
        </authorList>
    </citation>
    <scope>GENOME REANNOTATION</scope>
    <source>
        <strain>cv. Nipponbare</strain>
    </source>
</reference>
<reference key="4">
    <citation type="journal article" date="2013" name="Rice">
        <title>Improvement of the Oryza sativa Nipponbare reference genome using next generation sequence and optical map data.</title>
        <authorList>
            <person name="Kawahara Y."/>
            <person name="de la Bastide M."/>
            <person name="Hamilton J.P."/>
            <person name="Kanamori H."/>
            <person name="McCombie W.R."/>
            <person name="Ouyang S."/>
            <person name="Schwartz D.C."/>
            <person name="Tanaka T."/>
            <person name="Wu J."/>
            <person name="Zhou S."/>
            <person name="Childs K.L."/>
            <person name="Davidson R.M."/>
            <person name="Lin H."/>
            <person name="Quesada-Ocampo L."/>
            <person name="Vaillancourt B."/>
            <person name="Sakai H."/>
            <person name="Lee S.S."/>
            <person name="Kim J."/>
            <person name="Numa H."/>
            <person name="Itoh T."/>
            <person name="Buell C.R."/>
            <person name="Matsumoto T."/>
        </authorList>
    </citation>
    <scope>GENOME REANNOTATION</scope>
    <source>
        <strain>cv. Nipponbare</strain>
    </source>
</reference>
<reference key="5">
    <citation type="journal article" date="2006" name="J. Exp. Bot.">
        <title>Genome-wide analysis of plant glutaredoxin systems.</title>
        <authorList>
            <person name="Rouhier N."/>
            <person name="Couturier J."/>
            <person name="Jacquot J.-P."/>
        </authorList>
    </citation>
    <scope>GENE FAMILY</scope>
</reference>
<dbReference type="EMBL" id="DP000010">
    <property type="protein sequence ID" value="ABA95123.1"/>
    <property type="molecule type" value="Genomic_DNA"/>
</dbReference>
<dbReference type="EMBL" id="AP008217">
    <property type="protein sequence ID" value="BAH95417.1"/>
    <property type="molecule type" value="Genomic_DNA"/>
</dbReference>
<dbReference type="EMBL" id="AP014967">
    <property type="protein sequence ID" value="BAT15103.1"/>
    <property type="molecule type" value="Genomic_DNA"/>
</dbReference>
<dbReference type="RefSeq" id="XP_015616679.1">
    <property type="nucleotide sequence ID" value="XM_015761193.1"/>
</dbReference>
<dbReference type="SMR" id="Q2R075"/>
<dbReference type="FunCoup" id="Q2R075">
    <property type="interactions" value="14"/>
</dbReference>
<dbReference type="STRING" id="39947.Q2R075"/>
<dbReference type="PaxDb" id="39947-Q2R075"/>
<dbReference type="EnsemblPlants" id="Os11t0656000-00">
    <property type="protein sequence ID" value="Os11t0656000-00"/>
    <property type="gene ID" value="Os11g0656000"/>
</dbReference>
<dbReference type="Gramene" id="Os11t0656000-00">
    <property type="protein sequence ID" value="Os11t0656000-00"/>
    <property type="gene ID" value="Os11g0656000"/>
</dbReference>
<dbReference type="KEGG" id="dosa:Os11g0656000"/>
<dbReference type="eggNOG" id="KOG1752">
    <property type="taxonomic scope" value="Eukaryota"/>
</dbReference>
<dbReference type="HOGENOM" id="CLU_026126_6_0_1"/>
<dbReference type="InParanoid" id="Q2R075"/>
<dbReference type="OMA" id="PRGLEMQ"/>
<dbReference type="OrthoDB" id="418495at2759"/>
<dbReference type="Proteomes" id="UP000000763">
    <property type="component" value="Chromosome 11"/>
</dbReference>
<dbReference type="Proteomes" id="UP000059680">
    <property type="component" value="Chromosome 11"/>
</dbReference>
<dbReference type="GO" id="GO:0005737">
    <property type="term" value="C:cytoplasm"/>
    <property type="evidence" value="ECO:0007669"/>
    <property type="project" value="UniProtKB-SubCell"/>
</dbReference>
<dbReference type="GO" id="GO:0005634">
    <property type="term" value="C:nucleus"/>
    <property type="evidence" value="ECO:0007669"/>
    <property type="project" value="UniProtKB-SubCell"/>
</dbReference>
<dbReference type="CDD" id="cd03419">
    <property type="entry name" value="GRX_GRXh_1_2_like"/>
    <property type="match status" value="1"/>
</dbReference>
<dbReference type="Gene3D" id="3.40.30.10">
    <property type="entry name" value="Glutaredoxin"/>
    <property type="match status" value="1"/>
</dbReference>
<dbReference type="InterPro" id="IPR011905">
    <property type="entry name" value="GlrX-like_pln_2"/>
</dbReference>
<dbReference type="InterPro" id="IPR002109">
    <property type="entry name" value="Glutaredoxin"/>
</dbReference>
<dbReference type="InterPro" id="IPR014025">
    <property type="entry name" value="Glutaredoxin_subgr"/>
</dbReference>
<dbReference type="InterPro" id="IPR036249">
    <property type="entry name" value="Thioredoxin-like_sf"/>
</dbReference>
<dbReference type="NCBIfam" id="TIGR02189">
    <property type="entry name" value="GlrX-like_plant"/>
    <property type="match status" value="1"/>
</dbReference>
<dbReference type="PANTHER" id="PTHR10168">
    <property type="entry name" value="GLUTAREDOXIN"/>
    <property type="match status" value="1"/>
</dbReference>
<dbReference type="Pfam" id="PF00462">
    <property type="entry name" value="Glutaredoxin"/>
    <property type="match status" value="1"/>
</dbReference>
<dbReference type="PRINTS" id="PR00160">
    <property type="entry name" value="GLUTAREDOXIN"/>
</dbReference>
<dbReference type="SUPFAM" id="SSF52833">
    <property type="entry name" value="Thioredoxin-like"/>
    <property type="match status" value="1"/>
</dbReference>
<dbReference type="PROSITE" id="PS51354">
    <property type="entry name" value="GLUTAREDOXIN_2"/>
    <property type="match status" value="1"/>
</dbReference>
<organism>
    <name type="scientific">Oryza sativa subsp. japonica</name>
    <name type="common">Rice</name>
    <dbReference type="NCBI Taxonomy" id="39947"/>
    <lineage>
        <taxon>Eukaryota</taxon>
        <taxon>Viridiplantae</taxon>
        <taxon>Streptophyta</taxon>
        <taxon>Embryophyta</taxon>
        <taxon>Tracheophyta</taxon>
        <taxon>Spermatophyta</taxon>
        <taxon>Magnoliopsida</taxon>
        <taxon>Liliopsida</taxon>
        <taxon>Poales</taxon>
        <taxon>Poaceae</taxon>
        <taxon>BOP clade</taxon>
        <taxon>Oryzoideae</taxon>
        <taxon>Oryzeae</taxon>
        <taxon>Oryzinae</taxon>
        <taxon>Oryza</taxon>
        <taxon>Oryza sativa</taxon>
    </lineage>
</organism>
<accession>Q2R075</accession>
<accession>C7J848</accession>